<proteinExistence type="inferred from homology"/>
<evidence type="ECO:0000250" key="1"/>
<evidence type="ECO:0000255" key="2"/>
<evidence type="ECO:0000305" key="3"/>
<keyword id="KW-0106">Calcium</keyword>
<keyword id="KW-0204">Cytolysis</keyword>
<keyword id="KW-0354">Hemolysis</keyword>
<keyword id="KW-1032">Host cell membrane</keyword>
<keyword id="KW-1043">Host membrane</keyword>
<keyword id="KW-0449">Lipoprotein</keyword>
<keyword id="KW-0472">Membrane</keyword>
<keyword id="KW-0677">Repeat</keyword>
<keyword id="KW-0964">Secreted</keyword>
<keyword id="KW-0800">Toxin</keyword>
<keyword id="KW-0812">Transmembrane</keyword>
<keyword id="KW-1133">Transmembrane helix</keyword>
<keyword id="KW-0843">Virulence</keyword>
<name>LKA16_MANHA</name>
<feature type="chain" id="PRO_0000196233" description="Leukotoxin">
    <location>
        <begin position="1"/>
        <end position="953"/>
    </location>
</feature>
<feature type="transmembrane region" description="Helical" evidence="2">
    <location>
        <begin position="230"/>
        <end position="250"/>
    </location>
</feature>
<feature type="transmembrane region" description="Helical" evidence="2">
    <location>
        <begin position="297"/>
        <end position="317"/>
    </location>
</feature>
<feature type="transmembrane region" description="Helical" evidence="2">
    <location>
        <begin position="359"/>
        <end position="379"/>
    </location>
</feature>
<feature type="transmembrane region" description="Helical" evidence="2">
    <location>
        <begin position="381"/>
        <end position="401"/>
    </location>
</feature>
<feature type="repeat" description="Hemolysin-type calcium-binding 1">
    <location>
        <begin position="715"/>
        <end position="732"/>
    </location>
</feature>
<feature type="repeat" description="Hemolysin-type calcium-binding 2">
    <location>
        <begin position="733"/>
        <end position="750"/>
    </location>
</feature>
<feature type="repeat" description="Hemolysin-type calcium-binding 3">
    <location>
        <begin position="751"/>
        <end position="768"/>
    </location>
</feature>
<feature type="repeat" description="Hemolysin-type calcium-binding 4">
    <location>
        <begin position="769"/>
        <end position="786"/>
    </location>
</feature>
<feature type="repeat" description="Hemolysin-type calcium-binding 5">
    <location>
        <begin position="789"/>
        <end position="806"/>
    </location>
</feature>
<comment type="function">
    <text evidence="1">Pasteurella leukotoxins are exotoxins that attack host leukocytes and especially polymorphonuclear cells, by causing cell rupture. The leukotoxin binds to the host LFA-1 integrin and induces a signaling cascade leading to many biological effects, including tyrosine phosphorylation of the CD18 tail, elevation of the intracellular Ca(2+) and lysis of the host cell (By similarity). This leukotoxin is a major contributor to the pathogenesis of lung injury in ovine pneumonic pasteurellosis. It also has weak hemolytic activity.</text>
</comment>
<comment type="subcellular location">
    <subcellularLocation>
        <location evidence="1">Secreted</location>
    </subcellularLocation>
    <subcellularLocation>
        <location evidence="1">Host cell membrane</location>
        <topology evidence="1">Multi-pass membrane protein</topology>
    </subcellularLocation>
</comment>
<comment type="domain">
    <text evidence="1">The transmembrane domains are believed to be involved in pore formation in target cells.</text>
</comment>
<comment type="domain">
    <text evidence="1">The Gly-rich region is probably involved in calcium binding, which is required for target cell-binding and cytolytic activity.</text>
</comment>
<comment type="domain">
    <text evidence="1">The C-terminal domain contains an export signal that is recognized by the ABC transporter complex LktBD.</text>
</comment>
<comment type="PTM">
    <text evidence="1">Acylated by LktC. The toxin only becomes active when modified (By similarity).</text>
</comment>
<comment type="miscellaneous">
    <text>The lktCABD operon has a complex mosaic structure that has been derived by extensive inter- and intraspecies horizontal DNA transfer and intragenic recombination events.</text>
</comment>
<comment type="similarity">
    <text evidence="3">Belongs to the RTX prokaryotic toxin (TC 1.C.11) family.</text>
</comment>
<gene>
    <name type="primary">lktA</name>
</gene>
<protein>
    <recommendedName>
        <fullName>Leukotoxin</fullName>
        <shortName>Lkt</shortName>
    </recommendedName>
</protein>
<sequence length="953" mass="102079">MGNKLTNISTNLKSSWLTAKSGLNRTGQSLAKAGQSLKTGAKKIILYIPKDYQYDTEKGNGLQDLVKAAQELGIEVQKEEGNDIAKAQTSLGTIQNVLGLTERGIVLSAPQLDKLLQKTKVGQAIGSAENLTKGFSNAKTVLSGIQSILGSVLAGMDLDEALQKNSNELTLAKAGLELTNSLIENIANSVKTLDAFGDQINQLGSKLQNVKGLSSLGDKLKGLSGFDKTSLGLDVVSGLLSGATAALVLADKNASTSRKVGAGFELANQVVGNITKAVSSYILAQRVAAGLSSTGPVAALIASTVSLAISPLAFAGIADKFNHAKSLESYAERFKKLGYDGDNLLAEYQRGTGTIDASVTAINTALAAIAGGVSAAAAGSVIASPIALLVSGITGVISTILQYSKQAMFEHVANKIHNKIVEWEKNNGGKNYFENGYDARYLANLQDNMKFLLNLNKELQAERVIAITQQQWDSNIGDLAGISRLGEKVLSGKAYVDAFEEGQHLKADKLVQLDSAKGIIDVSNTGEAKTQHILFRTPLLTPGTEKRERVQTGKYEYITKLHINRVDSWKITDGAASSTFDLTNVVQRIGIELDNAGNVTKTKETKIIAKLGEGDDNVFVGSGTTEIDGGEGYDRVHYSRGNYGALTIDATKETEQGSYTVNRFVESGKALHEVTSTHTALVGNREEKIEYRHSNNQHHAGYYTKDTLKAVEEIIGTSHNDIFKGSKFNDAFNGGDGVDTIDGNDGNDRLFGGKGDDIIDGGNGDDFIDGGKGNDLLHGGKGDDIFVHRQGDGNDSITESEGNDKLSFSDSNLKDLTFEKVNHHLVITNTKQEKVTIQNWFREAEFAKTIQNYVATRDDKIEEIIGQNGERITSKQVDELIEKGNGKIAQSELTKVVDNYQLLKYSRDASNSLDKLISSASAFTSSNDSRNVLASPTSMLDPSLSSIQFARAA</sequence>
<accession>Q9EV32</accession>
<organism>
    <name type="scientific">Mannheimia haemolytica</name>
    <name type="common">Pasteurella haemolytica</name>
    <dbReference type="NCBI Taxonomy" id="75985"/>
    <lineage>
        <taxon>Bacteria</taxon>
        <taxon>Pseudomonadati</taxon>
        <taxon>Pseudomonadota</taxon>
        <taxon>Gammaproteobacteria</taxon>
        <taxon>Pasteurellales</taxon>
        <taxon>Pasteurellaceae</taxon>
        <taxon>Mannheimia</taxon>
    </lineage>
</organism>
<reference key="1">
    <citation type="journal article" date="2001" name="J. Bacteriol.">
        <title>Sequence diversity and molecular evolution of the leukotoxin (lktA) gene in bovine and ovine strains of Mannheimia (Pasteurella) haemolytica.</title>
        <authorList>
            <person name="Davies R.L."/>
            <person name="Whittam T.S."/>
            <person name="Selander R.K."/>
        </authorList>
    </citation>
    <scope>NUCLEOTIDE SEQUENCE [GENOMIC DNA]</scope>
    <source>
        <strain>Serotype A16 / PH706</strain>
    </source>
</reference>
<dbReference type="EMBL" id="AF314509">
    <property type="protein sequence ID" value="AAG40293.1"/>
    <property type="molecule type" value="Genomic_DNA"/>
</dbReference>
<dbReference type="SMR" id="Q9EV32"/>
<dbReference type="GO" id="GO:0005576">
    <property type="term" value="C:extracellular region"/>
    <property type="evidence" value="ECO:0007669"/>
    <property type="project" value="UniProtKB-SubCell"/>
</dbReference>
<dbReference type="GO" id="GO:0020002">
    <property type="term" value="C:host cell plasma membrane"/>
    <property type="evidence" value="ECO:0007669"/>
    <property type="project" value="UniProtKB-SubCell"/>
</dbReference>
<dbReference type="GO" id="GO:0016020">
    <property type="term" value="C:membrane"/>
    <property type="evidence" value="ECO:0007669"/>
    <property type="project" value="UniProtKB-KW"/>
</dbReference>
<dbReference type="GO" id="GO:0005509">
    <property type="term" value="F:calcium ion binding"/>
    <property type="evidence" value="ECO:0007669"/>
    <property type="project" value="InterPro"/>
</dbReference>
<dbReference type="GO" id="GO:0015267">
    <property type="term" value="F:channel activity"/>
    <property type="evidence" value="ECO:0007669"/>
    <property type="project" value="InterPro"/>
</dbReference>
<dbReference type="GO" id="GO:0090729">
    <property type="term" value="F:toxin activity"/>
    <property type="evidence" value="ECO:0007669"/>
    <property type="project" value="UniProtKB-KW"/>
</dbReference>
<dbReference type="GO" id="GO:0031640">
    <property type="term" value="P:killing of cells of another organism"/>
    <property type="evidence" value="ECO:0007669"/>
    <property type="project" value="UniProtKB-KW"/>
</dbReference>
<dbReference type="FunFam" id="2.150.10.10:FF:000002">
    <property type="entry name" value="Leukotoxin"/>
    <property type="match status" value="1"/>
</dbReference>
<dbReference type="Gene3D" id="2.150.10.10">
    <property type="entry name" value="Serralysin-like metalloprotease, C-terminal"/>
    <property type="match status" value="1"/>
</dbReference>
<dbReference type="InterPro" id="IPR018511">
    <property type="entry name" value="Hemolysin-typ_Ca-bd_CS"/>
</dbReference>
<dbReference type="InterPro" id="IPR001343">
    <property type="entry name" value="Hemolysn_Ca-bd"/>
</dbReference>
<dbReference type="InterPro" id="IPR013550">
    <property type="entry name" value="RTX_C"/>
</dbReference>
<dbReference type="InterPro" id="IPR018504">
    <property type="entry name" value="RTX_pore_form"/>
</dbReference>
<dbReference type="InterPro" id="IPR050557">
    <property type="entry name" value="RTX_toxin/Mannuronan_C5-epim"/>
</dbReference>
<dbReference type="InterPro" id="IPR003995">
    <property type="entry name" value="RTX_toxin_determinant-A"/>
</dbReference>
<dbReference type="InterPro" id="IPR011049">
    <property type="entry name" value="Serralysin-like_metalloprot_C"/>
</dbReference>
<dbReference type="NCBIfam" id="NF033943">
    <property type="entry name" value="RTX_toxin"/>
    <property type="match status" value="1"/>
</dbReference>
<dbReference type="PANTHER" id="PTHR38340">
    <property type="entry name" value="S-LAYER PROTEIN"/>
    <property type="match status" value="1"/>
</dbReference>
<dbReference type="PANTHER" id="PTHR38340:SF1">
    <property type="entry name" value="S-LAYER PROTEIN"/>
    <property type="match status" value="1"/>
</dbReference>
<dbReference type="Pfam" id="PF00353">
    <property type="entry name" value="HemolysinCabind"/>
    <property type="match status" value="2"/>
</dbReference>
<dbReference type="Pfam" id="PF02382">
    <property type="entry name" value="RTX"/>
    <property type="match status" value="1"/>
</dbReference>
<dbReference type="Pfam" id="PF08339">
    <property type="entry name" value="RTX_C"/>
    <property type="match status" value="1"/>
</dbReference>
<dbReference type="PRINTS" id="PR00313">
    <property type="entry name" value="CABNDNGRPT"/>
</dbReference>
<dbReference type="PRINTS" id="PR01488">
    <property type="entry name" value="RTXTOXINA"/>
</dbReference>
<dbReference type="SUPFAM" id="SSF51120">
    <property type="entry name" value="beta-Roll"/>
    <property type="match status" value="1"/>
</dbReference>
<dbReference type="PROSITE" id="PS00330">
    <property type="entry name" value="HEMOLYSIN_CALCIUM"/>
    <property type="match status" value="4"/>
</dbReference>